<accession>Q7ZX23</accession>
<accession>Q7SY80</accession>
<comment type="function">
    <text evidence="1">Catalyzes the phosphorylation of pyrimidine nucleoside monophosphates at the expense of ATP. Plays an important role in de novo pyrimidine nucleotide biosynthesis. Has preference for UMP and CMP as phosphate acceptors. Also displays broad nucleoside diphosphate kinase activity.</text>
</comment>
<comment type="catalytic activity">
    <reaction evidence="1">
        <text>CMP + ATP = CDP + ADP</text>
        <dbReference type="Rhea" id="RHEA:11600"/>
        <dbReference type="ChEBI" id="CHEBI:30616"/>
        <dbReference type="ChEBI" id="CHEBI:58069"/>
        <dbReference type="ChEBI" id="CHEBI:60377"/>
        <dbReference type="ChEBI" id="CHEBI:456216"/>
        <dbReference type="EC" id="2.7.4.14"/>
    </reaction>
</comment>
<comment type="catalytic activity">
    <reaction evidence="1">
        <text>dCMP + ATP = dCDP + ADP</text>
        <dbReference type="Rhea" id="RHEA:25094"/>
        <dbReference type="ChEBI" id="CHEBI:30616"/>
        <dbReference type="ChEBI" id="CHEBI:57566"/>
        <dbReference type="ChEBI" id="CHEBI:58593"/>
        <dbReference type="ChEBI" id="CHEBI:456216"/>
        <dbReference type="EC" id="2.7.4.14"/>
    </reaction>
</comment>
<comment type="catalytic activity">
    <reaction evidence="1">
        <text>UMP + ATP = UDP + ADP</text>
        <dbReference type="Rhea" id="RHEA:24400"/>
        <dbReference type="ChEBI" id="CHEBI:30616"/>
        <dbReference type="ChEBI" id="CHEBI:57865"/>
        <dbReference type="ChEBI" id="CHEBI:58223"/>
        <dbReference type="ChEBI" id="CHEBI:456216"/>
        <dbReference type="EC" id="2.7.4.14"/>
    </reaction>
</comment>
<comment type="catalytic activity">
    <reaction evidence="1">
        <text>a 2'-deoxyribonucleoside 5'-diphosphate + ATP = a 2'-deoxyribonucleoside 5'-triphosphate + ADP</text>
        <dbReference type="Rhea" id="RHEA:44640"/>
        <dbReference type="ChEBI" id="CHEBI:30616"/>
        <dbReference type="ChEBI" id="CHEBI:61560"/>
        <dbReference type="ChEBI" id="CHEBI:73316"/>
        <dbReference type="ChEBI" id="CHEBI:456216"/>
        <dbReference type="EC" id="2.7.4.6"/>
    </reaction>
</comment>
<comment type="catalytic activity">
    <reaction evidence="1">
        <text>a ribonucleoside 5'-diphosphate + ATP = a ribonucleoside 5'-triphosphate + ADP</text>
        <dbReference type="Rhea" id="RHEA:18113"/>
        <dbReference type="ChEBI" id="CHEBI:30616"/>
        <dbReference type="ChEBI" id="CHEBI:57930"/>
        <dbReference type="ChEBI" id="CHEBI:61557"/>
        <dbReference type="ChEBI" id="CHEBI:456216"/>
        <dbReference type="EC" id="2.7.4.6"/>
    </reaction>
</comment>
<comment type="cofactor">
    <cofactor evidence="1">
        <name>Mg(2+)</name>
        <dbReference type="ChEBI" id="CHEBI:18420"/>
    </cofactor>
    <text evidence="1">Binds 1 Mg(2+) ion per monomer.</text>
</comment>
<comment type="subunit">
    <text evidence="1">Monomer.</text>
</comment>
<comment type="subcellular location">
    <subcellularLocation>
        <location evidence="1">Nucleus</location>
    </subcellularLocation>
    <subcellularLocation>
        <location evidence="1">Cytoplasm</location>
    </subcellularLocation>
    <text evidence="1">Predominantly nuclear.</text>
</comment>
<comment type="domain">
    <text evidence="1">Consists of three domains, a large central CORE domain and two small peripheral domains, NMPbind and LID, which undergo movements during catalysis. The LID domain closes over the site of phosphoryl transfer upon ATP binding. Assembling and dissambling the active center during each catalytic cycle provides an effective means to prevent ATP hydrolysis.</text>
</comment>
<comment type="similarity">
    <text evidence="1">Belongs to the adenylate kinase family. UMP-CMP kinase subfamily.</text>
</comment>
<comment type="sequence caution" evidence="2">
    <conflict type="erroneous initiation">
        <sequence resource="EMBL-CDS" id="AAH45275"/>
    </conflict>
</comment>
<comment type="sequence caution" evidence="2">
    <conflict type="erroneous initiation">
        <sequence resource="EMBL-CDS" id="AAH54975"/>
    </conflict>
</comment>
<feature type="chain" id="PRO_0000292026" description="UMP-CMP kinase">
    <location>
        <begin position="1"/>
        <end position="193"/>
    </location>
</feature>
<feature type="region of interest" description="NMP" evidence="1">
    <location>
        <begin position="33"/>
        <end position="63"/>
    </location>
</feature>
<feature type="region of interest" description="LID" evidence="1">
    <location>
        <begin position="133"/>
        <end position="143"/>
    </location>
</feature>
<feature type="binding site" evidence="1">
    <location>
        <begin position="13"/>
        <end position="18"/>
    </location>
    <ligand>
        <name>ATP</name>
        <dbReference type="ChEBI" id="CHEBI:30616"/>
    </ligand>
</feature>
<feature type="binding site" evidence="1">
    <location>
        <position position="39"/>
    </location>
    <ligand>
        <name>a ribonucleoside 5'-phosphate</name>
        <dbReference type="ChEBI" id="CHEBI:58043"/>
    </ligand>
</feature>
<feature type="binding site" evidence="1">
    <location>
        <begin position="61"/>
        <end position="63"/>
    </location>
    <ligand>
        <name>a ribonucleoside 5'-phosphate</name>
        <dbReference type="ChEBI" id="CHEBI:58043"/>
    </ligand>
</feature>
<feature type="binding site" evidence="1">
    <location>
        <begin position="93"/>
        <end position="96"/>
    </location>
    <ligand>
        <name>a ribonucleoside 5'-phosphate</name>
        <dbReference type="ChEBI" id="CHEBI:58043"/>
    </ligand>
</feature>
<feature type="binding site" evidence="1">
    <location>
        <position position="100"/>
    </location>
    <ligand>
        <name>CMP</name>
        <dbReference type="ChEBI" id="CHEBI:60377"/>
    </ligand>
</feature>
<feature type="binding site" evidence="1">
    <location>
        <position position="134"/>
    </location>
    <ligand>
        <name>ATP</name>
        <dbReference type="ChEBI" id="CHEBI:30616"/>
    </ligand>
</feature>
<feature type="binding site" evidence="1">
    <location>
        <position position="140"/>
    </location>
    <ligand>
        <name>a ribonucleoside 5'-phosphate</name>
        <dbReference type="ChEBI" id="CHEBI:58043"/>
    </ligand>
</feature>
<feature type="binding site" evidence="1">
    <location>
        <position position="151"/>
    </location>
    <ligand>
        <name>a ribonucleoside 5'-phosphate</name>
        <dbReference type="ChEBI" id="CHEBI:58043"/>
    </ligand>
</feature>
<feature type="binding site" evidence="1">
    <location>
        <position position="179"/>
    </location>
    <ligand>
        <name>ATP</name>
        <dbReference type="ChEBI" id="CHEBI:30616"/>
    </ligand>
</feature>
<feature type="sequence conflict" description="In Ref. 1; AAH54975." evidence="2" ref="1">
    <original>F</original>
    <variation>I</variation>
    <location>
        <position position="116"/>
    </location>
</feature>
<protein>
    <recommendedName>
        <fullName evidence="1">UMP-CMP kinase</fullName>
        <ecNumber evidence="1">2.7.4.14</ecNumber>
    </recommendedName>
    <alternativeName>
        <fullName evidence="1">Deoxycytidylate kinase</fullName>
        <shortName evidence="1">CK</shortName>
        <shortName evidence="1">dCMP kinase</shortName>
    </alternativeName>
    <alternativeName>
        <fullName evidence="1">Nucleoside-diphosphate kinase</fullName>
        <ecNumber evidence="1">2.7.4.6</ecNumber>
    </alternativeName>
    <alternativeName>
        <fullName evidence="1">Uridine monophosphate/cytidine monophosphate kinase</fullName>
        <shortName evidence="1">UMP/CMP kinase</shortName>
        <shortName evidence="1">UMP/CMPK</shortName>
    </alternativeName>
</protein>
<evidence type="ECO:0000255" key="1">
    <source>
        <dbReference type="HAMAP-Rule" id="MF_03172"/>
    </source>
</evidence>
<evidence type="ECO:0000305" key="2"/>
<name>KCY_XENLA</name>
<organism>
    <name type="scientific">Xenopus laevis</name>
    <name type="common">African clawed frog</name>
    <dbReference type="NCBI Taxonomy" id="8355"/>
    <lineage>
        <taxon>Eukaryota</taxon>
        <taxon>Metazoa</taxon>
        <taxon>Chordata</taxon>
        <taxon>Craniata</taxon>
        <taxon>Vertebrata</taxon>
        <taxon>Euteleostomi</taxon>
        <taxon>Amphibia</taxon>
        <taxon>Batrachia</taxon>
        <taxon>Anura</taxon>
        <taxon>Pipoidea</taxon>
        <taxon>Pipidae</taxon>
        <taxon>Xenopodinae</taxon>
        <taxon>Xenopus</taxon>
        <taxon>Xenopus</taxon>
    </lineage>
</organism>
<gene>
    <name type="primary">cmpk1</name>
    <name type="synonym">cmpk</name>
</gene>
<proteinExistence type="evidence at transcript level"/>
<dbReference type="EC" id="2.7.4.14" evidence="1"/>
<dbReference type="EC" id="2.7.4.6" evidence="1"/>
<dbReference type="EMBL" id="BC045275">
    <property type="protein sequence ID" value="AAH45275.1"/>
    <property type="status" value="ALT_INIT"/>
    <property type="molecule type" value="mRNA"/>
</dbReference>
<dbReference type="EMBL" id="BC054975">
    <property type="protein sequence ID" value="AAH54975.2"/>
    <property type="status" value="ALT_INIT"/>
    <property type="molecule type" value="mRNA"/>
</dbReference>
<dbReference type="RefSeq" id="NP_001082709.1">
    <property type="nucleotide sequence ID" value="NM_001089240.1"/>
</dbReference>
<dbReference type="SMR" id="Q7ZX23"/>
<dbReference type="DNASU" id="398670"/>
<dbReference type="GeneID" id="398670"/>
<dbReference type="KEGG" id="xla:398670"/>
<dbReference type="AGR" id="Xenbase:XB-GENE-980044"/>
<dbReference type="CTD" id="398670"/>
<dbReference type="Xenbase" id="XB-GENE-980044">
    <property type="gene designation" value="cmpk1.S"/>
</dbReference>
<dbReference type="OrthoDB" id="442176at2759"/>
<dbReference type="Proteomes" id="UP000186698">
    <property type="component" value="Chromosome 4S"/>
</dbReference>
<dbReference type="Bgee" id="398670">
    <property type="expression patterns" value="Expressed in zone of skin and 19 other cell types or tissues"/>
</dbReference>
<dbReference type="GO" id="GO:0005737">
    <property type="term" value="C:cytoplasm"/>
    <property type="evidence" value="ECO:0000318"/>
    <property type="project" value="GO_Central"/>
</dbReference>
<dbReference type="GO" id="GO:0005634">
    <property type="term" value="C:nucleus"/>
    <property type="evidence" value="ECO:0000318"/>
    <property type="project" value="GO_Central"/>
</dbReference>
<dbReference type="GO" id="GO:0004127">
    <property type="term" value="F:(d)CMP kinase activity"/>
    <property type="evidence" value="ECO:0000318"/>
    <property type="project" value="GO_Central"/>
</dbReference>
<dbReference type="GO" id="GO:0005524">
    <property type="term" value="F:ATP binding"/>
    <property type="evidence" value="ECO:0007669"/>
    <property type="project" value="UniProtKB-KW"/>
</dbReference>
<dbReference type="GO" id="GO:0036430">
    <property type="term" value="F:CMP kinase activity"/>
    <property type="evidence" value="ECO:0007669"/>
    <property type="project" value="RHEA"/>
</dbReference>
<dbReference type="GO" id="GO:0036431">
    <property type="term" value="F:dCMP kinase activity"/>
    <property type="evidence" value="ECO:0007669"/>
    <property type="project" value="RHEA"/>
</dbReference>
<dbReference type="GO" id="GO:0004550">
    <property type="term" value="F:nucleoside diphosphate kinase activity"/>
    <property type="evidence" value="ECO:0000250"/>
    <property type="project" value="UniProtKB"/>
</dbReference>
<dbReference type="GO" id="GO:0033862">
    <property type="term" value="F:UMP kinase activity"/>
    <property type="evidence" value="ECO:0000318"/>
    <property type="project" value="GO_Central"/>
</dbReference>
<dbReference type="GO" id="GO:0006207">
    <property type="term" value="P:'de novo' pyrimidine nucleobase biosynthetic process"/>
    <property type="evidence" value="ECO:0007669"/>
    <property type="project" value="InterPro"/>
</dbReference>
<dbReference type="GO" id="GO:0046705">
    <property type="term" value="P:CDP biosynthetic process"/>
    <property type="evidence" value="ECO:0000318"/>
    <property type="project" value="GO_Central"/>
</dbReference>
<dbReference type="GO" id="GO:0006225">
    <property type="term" value="P:UDP biosynthetic process"/>
    <property type="evidence" value="ECO:0000318"/>
    <property type="project" value="GO_Central"/>
</dbReference>
<dbReference type="CDD" id="cd01428">
    <property type="entry name" value="ADK"/>
    <property type="match status" value="1"/>
</dbReference>
<dbReference type="FunFam" id="3.40.50.300:FF:000315">
    <property type="entry name" value="Adenylate kinase 1"/>
    <property type="match status" value="1"/>
</dbReference>
<dbReference type="Gene3D" id="3.40.50.300">
    <property type="entry name" value="P-loop containing nucleotide triphosphate hydrolases"/>
    <property type="match status" value="1"/>
</dbReference>
<dbReference type="HAMAP" id="MF_00235">
    <property type="entry name" value="Adenylate_kinase_Adk"/>
    <property type="match status" value="1"/>
</dbReference>
<dbReference type="HAMAP" id="MF_03172">
    <property type="entry name" value="Adenylate_kinase_UMP_CMP_kin"/>
    <property type="match status" value="1"/>
</dbReference>
<dbReference type="InterPro" id="IPR000850">
    <property type="entry name" value="Adenylat/UMP-CMP_kin"/>
</dbReference>
<dbReference type="InterPro" id="IPR033690">
    <property type="entry name" value="Adenylat_kinase_CS"/>
</dbReference>
<dbReference type="InterPro" id="IPR027417">
    <property type="entry name" value="P-loop_NTPase"/>
</dbReference>
<dbReference type="InterPro" id="IPR006266">
    <property type="entry name" value="UMP_CMP_kinase"/>
</dbReference>
<dbReference type="NCBIfam" id="TIGR01359">
    <property type="entry name" value="UMP_CMP_kin_fam"/>
    <property type="match status" value="1"/>
</dbReference>
<dbReference type="PANTHER" id="PTHR23359">
    <property type="entry name" value="NUCLEOTIDE KINASE"/>
    <property type="match status" value="1"/>
</dbReference>
<dbReference type="Pfam" id="PF00406">
    <property type="entry name" value="ADK"/>
    <property type="match status" value="1"/>
</dbReference>
<dbReference type="PRINTS" id="PR00094">
    <property type="entry name" value="ADENYLTKNASE"/>
</dbReference>
<dbReference type="SUPFAM" id="SSF52540">
    <property type="entry name" value="P-loop containing nucleoside triphosphate hydrolases"/>
    <property type="match status" value="1"/>
</dbReference>
<dbReference type="PROSITE" id="PS00113">
    <property type="entry name" value="ADENYLATE_KINASE"/>
    <property type="match status" value="1"/>
</dbReference>
<sequence length="193" mass="22106">MKPLVVFVLGGPGAGKGTQCERIVQKYGYTHLSAGDLLRDERKKPDSQYGELIESYIRDGKIVPVEITISLLQRAMERTMAFDANKHKFLIDGFPRNEDNLQGWERTMNGKADVSFVLFFDCDNETCIERCLERGKSSGRSDDNRESLEKRIQTYLQSTRPIIDLYEKRGKVRKVDASKSVDEVFTKVQNIFD</sequence>
<reference key="1">
    <citation type="submission" date="2003-01" db="EMBL/GenBank/DDBJ databases">
        <authorList>
            <consortium name="NIH - Xenopus Gene Collection (XGC) project"/>
        </authorList>
    </citation>
    <scope>NUCLEOTIDE SEQUENCE [LARGE SCALE MRNA]</scope>
    <source>
        <tissue>Embryo</tissue>
    </source>
</reference>
<keyword id="KW-0067">ATP-binding</keyword>
<keyword id="KW-0963">Cytoplasm</keyword>
<keyword id="KW-0418">Kinase</keyword>
<keyword id="KW-0547">Nucleotide-binding</keyword>
<keyword id="KW-0539">Nucleus</keyword>
<keyword id="KW-0665">Pyrimidine biosynthesis</keyword>
<keyword id="KW-1185">Reference proteome</keyword>
<keyword id="KW-0808">Transferase</keyword>